<name>KBTB7_HUMAN</name>
<keyword id="KW-0963">Cytoplasm</keyword>
<keyword id="KW-0880">Kelch repeat</keyword>
<keyword id="KW-0539">Nucleus</keyword>
<keyword id="KW-0597">Phosphoprotein</keyword>
<keyword id="KW-1267">Proteomics identification</keyword>
<keyword id="KW-1185">Reference proteome</keyword>
<keyword id="KW-0677">Repeat</keyword>
<keyword id="KW-0734">Signal transduction inhibitor</keyword>
<keyword id="KW-0833">Ubl conjugation pathway</keyword>
<organism>
    <name type="scientific">Homo sapiens</name>
    <name type="common">Human</name>
    <dbReference type="NCBI Taxonomy" id="9606"/>
    <lineage>
        <taxon>Eukaryota</taxon>
        <taxon>Metazoa</taxon>
        <taxon>Chordata</taxon>
        <taxon>Craniata</taxon>
        <taxon>Vertebrata</taxon>
        <taxon>Euteleostomi</taxon>
        <taxon>Mammalia</taxon>
        <taxon>Eutheria</taxon>
        <taxon>Euarchontoglires</taxon>
        <taxon>Primates</taxon>
        <taxon>Haplorrhini</taxon>
        <taxon>Catarrhini</taxon>
        <taxon>Hominidae</taxon>
        <taxon>Homo</taxon>
    </lineage>
</organism>
<evidence type="ECO:0000255" key="1">
    <source>
        <dbReference type="PROSITE-ProRule" id="PRU00037"/>
    </source>
</evidence>
<evidence type="ECO:0000256" key="2">
    <source>
        <dbReference type="SAM" id="MobiDB-lite"/>
    </source>
</evidence>
<evidence type="ECO:0000269" key="3">
    <source>
    </source>
</evidence>
<evidence type="ECO:0000305" key="4"/>
<evidence type="ECO:0000305" key="5">
    <source>
    </source>
</evidence>
<evidence type="ECO:0000312" key="6">
    <source>
        <dbReference type="HGNC" id="HGNC:25266"/>
    </source>
</evidence>
<evidence type="ECO:0007744" key="7">
    <source>
    </source>
</evidence>
<reference key="1">
    <citation type="submission" date="2008-08" db="EMBL/GenBank/DDBJ databases">
        <authorList>
            <person name="Hu J."/>
            <person name="Peng X."/>
            <person name="Yang Z."/>
            <person name="Yuan W."/>
            <person name="Wang Y."/>
            <person name="Li Y."/>
            <person name="Wu X."/>
        </authorList>
    </citation>
    <scope>NUCLEOTIDE SEQUENCE [MRNA]</scope>
</reference>
<reference key="2">
    <citation type="journal article" date="2001" name="Genome Res.">
        <title>Towards a catalog of human genes and proteins: sequencing and analysis of 500 novel complete protein coding human cDNAs.</title>
        <authorList>
            <person name="Wiemann S."/>
            <person name="Weil B."/>
            <person name="Wellenreuther R."/>
            <person name="Gassenhuber J."/>
            <person name="Glassl S."/>
            <person name="Ansorge W."/>
            <person name="Boecher M."/>
            <person name="Bloecker H."/>
            <person name="Bauersachs S."/>
            <person name="Blum H."/>
            <person name="Lauber J."/>
            <person name="Duesterhoeft A."/>
            <person name="Beyer A."/>
            <person name="Koehrer K."/>
            <person name="Strack N."/>
            <person name="Mewes H.-W."/>
            <person name="Ottenwaelder B."/>
            <person name="Obermaier B."/>
            <person name="Tampe J."/>
            <person name="Heubner D."/>
            <person name="Wambutt R."/>
            <person name="Korn B."/>
            <person name="Klein M."/>
            <person name="Poustka A."/>
        </authorList>
    </citation>
    <scope>NUCLEOTIDE SEQUENCE [LARGE SCALE MRNA]</scope>
    <source>
        <tissue>Testis</tissue>
    </source>
</reference>
<reference key="3">
    <citation type="journal article" date="2004" name="Nat. Genet.">
        <title>Complete sequencing and characterization of 21,243 full-length human cDNAs.</title>
        <authorList>
            <person name="Ota T."/>
            <person name="Suzuki Y."/>
            <person name="Nishikawa T."/>
            <person name="Otsuki T."/>
            <person name="Sugiyama T."/>
            <person name="Irie R."/>
            <person name="Wakamatsu A."/>
            <person name="Hayashi K."/>
            <person name="Sato H."/>
            <person name="Nagai K."/>
            <person name="Kimura K."/>
            <person name="Makita H."/>
            <person name="Sekine M."/>
            <person name="Obayashi M."/>
            <person name="Nishi T."/>
            <person name="Shibahara T."/>
            <person name="Tanaka T."/>
            <person name="Ishii S."/>
            <person name="Yamamoto J."/>
            <person name="Saito K."/>
            <person name="Kawai Y."/>
            <person name="Isono Y."/>
            <person name="Nakamura Y."/>
            <person name="Nagahari K."/>
            <person name="Murakami K."/>
            <person name="Yasuda T."/>
            <person name="Iwayanagi T."/>
            <person name="Wagatsuma M."/>
            <person name="Shiratori A."/>
            <person name="Sudo H."/>
            <person name="Hosoiri T."/>
            <person name="Kaku Y."/>
            <person name="Kodaira H."/>
            <person name="Kondo H."/>
            <person name="Sugawara M."/>
            <person name="Takahashi M."/>
            <person name="Kanda K."/>
            <person name="Yokoi T."/>
            <person name="Furuya T."/>
            <person name="Kikkawa E."/>
            <person name="Omura Y."/>
            <person name="Abe K."/>
            <person name="Kamihara K."/>
            <person name="Katsuta N."/>
            <person name="Sato K."/>
            <person name="Tanikawa M."/>
            <person name="Yamazaki M."/>
            <person name="Ninomiya K."/>
            <person name="Ishibashi T."/>
            <person name="Yamashita H."/>
            <person name="Murakawa K."/>
            <person name="Fujimori K."/>
            <person name="Tanai H."/>
            <person name="Kimata M."/>
            <person name="Watanabe M."/>
            <person name="Hiraoka S."/>
            <person name="Chiba Y."/>
            <person name="Ishida S."/>
            <person name="Ono Y."/>
            <person name="Takiguchi S."/>
            <person name="Watanabe S."/>
            <person name="Yosida M."/>
            <person name="Hotuta T."/>
            <person name="Kusano J."/>
            <person name="Kanehori K."/>
            <person name="Takahashi-Fujii A."/>
            <person name="Hara H."/>
            <person name="Tanase T.-O."/>
            <person name="Nomura Y."/>
            <person name="Togiya S."/>
            <person name="Komai F."/>
            <person name="Hara R."/>
            <person name="Takeuchi K."/>
            <person name="Arita M."/>
            <person name="Imose N."/>
            <person name="Musashino K."/>
            <person name="Yuuki H."/>
            <person name="Oshima A."/>
            <person name="Sasaki N."/>
            <person name="Aotsuka S."/>
            <person name="Yoshikawa Y."/>
            <person name="Matsunawa H."/>
            <person name="Ichihara T."/>
            <person name="Shiohata N."/>
            <person name="Sano S."/>
            <person name="Moriya S."/>
            <person name="Momiyama H."/>
            <person name="Satoh N."/>
            <person name="Takami S."/>
            <person name="Terashima Y."/>
            <person name="Suzuki O."/>
            <person name="Nakagawa S."/>
            <person name="Senoh A."/>
            <person name="Mizoguchi H."/>
            <person name="Goto Y."/>
            <person name="Shimizu F."/>
            <person name="Wakebe H."/>
            <person name="Hishigaki H."/>
            <person name="Watanabe T."/>
            <person name="Sugiyama A."/>
            <person name="Takemoto M."/>
            <person name="Kawakami B."/>
            <person name="Yamazaki M."/>
            <person name="Watanabe K."/>
            <person name="Kumagai A."/>
            <person name="Itakura S."/>
            <person name="Fukuzumi Y."/>
            <person name="Fujimori Y."/>
            <person name="Komiyama M."/>
            <person name="Tashiro H."/>
            <person name="Tanigami A."/>
            <person name="Fujiwara T."/>
            <person name="Ono T."/>
            <person name="Yamada K."/>
            <person name="Fujii Y."/>
            <person name="Ozaki K."/>
            <person name="Hirao M."/>
            <person name="Ohmori Y."/>
            <person name="Kawabata A."/>
            <person name="Hikiji T."/>
            <person name="Kobatake N."/>
            <person name="Inagaki H."/>
            <person name="Ikema Y."/>
            <person name="Okamoto S."/>
            <person name="Okitani R."/>
            <person name="Kawakami T."/>
            <person name="Noguchi S."/>
            <person name="Itoh T."/>
            <person name="Shigeta K."/>
            <person name="Senba T."/>
            <person name="Matsumura K."/>
            <person name="Nakajima Y."/>
            <person name="Mizuno T."/>
            <person name="Morinaga M."/>
            <person name="Sasaki M."/>
            <person name="Togashi T."/>
            <person name="Oyama M."/>
            <person name="Hata H."/>
            <person name="Watanabe M."/>
            <person name="Komatsu T."/>
            <person name="Mizushima-Sugano J."/>
            <person name="Satoh T."/>
            <person name="Shirai Y."/>
            <person name="Takahashi Y."/>
            <person name="Nakagawa K."/>
            <person name="Okumura K."/>
            <person name="Nagase T."/>
            <person name="Nomura N."/>
            <person name="Kikuchi H."/>
            <person name="Masuho Y."/>
            <person name="Yamashita R."/>
            <person name="Nakai K."/>
            <person name="Yada T."/>
            <person name="Nakamura Y."/>
            <person name="Ohara O."/>
            <person name="Isogai T."/>
            <person name="Sugano S."/>
        </authorList>
    </citation>
    <scope>NUCLEOTIDE SEQUENCE [LARGE SCALE MRNA]</scope>
    <source>
        <tissue>Brain</tissue>
    </source>
</reference>
<reference key="4">
    <citation type="journal article" date="2004" name="Nature">
        <title>The DNA sequence and analysis of human chromosome 13.</title>
        <authorList>
            <person name="Dunham A."/>
            <person name="Matthews L.H."/>
            <person name="Burton J."/>
            <person name="Ashurst J.L."/>
            <person name="Howe K.L."/>
            <person name="Ashcroft K.J."/>
            <person name="Beare D.M."/>
            <person name="Burford D.C."/>
            <person name="Hunt S.E."/>
            <person name="Griffiths-Jones S."/>
            <person name="Jones M.C."/>
            <person name="Keenan S.J."/>
            <person name="Oliver K."/>
            <person name="Scott C.E."/>
            <person name="Ainscough R."/>
            <person name="Almeida J.P."/>
            <person name="Ambrose K.D."/>
            <person name="Andrews D.T."/>
            <person name="Ashwell R.I.S."/>
            <person name="Babbage A.K."/>
            <person name="Bagguley C.L."/>
            <person name="Bailey J."/>
            <person name="Bannerjee R."/>
            <person name="Barlow K.F."/>
            <person name="Bates K."/>
            <person name="Beasley H."/>
            <person name="Bird C.P."/>
            <person name="Bray-Allen S."/>
            <person name="Brown A.J."/>
            <person name="Brown J.Y."/>
            <person name="Burrill W."/>
            <person name="Carder C."/>
            <person name="Carter N.P."/>
            <person name="Chapman J.C."/>
            <person name="Clamp M.E."/>
            <person name="Clark S.Y."/>
            <person name="Clarke G."/>
            <person name="Clee C.M."/>
            <person name="Clegg S.C."/>
            <person name="Cobley V."/>
            <person name="Collins J.E."/>
            <person name="Corby N."/>
            <person name="Coville G.J."/>
            <person name="Deloukas P."/>
            <person name="Dhami P."/>
            <person name="Dunham I."/>
            <person name="Dunn M."/>
            <person name="Earthrowl M.E."/>
            <person name="Ellington A.G."/>
            <person name="Faulkner L."/>
            <person name="Frankish A.G."/>
            <person name="Frankland J."/>
            <person name="French L."/>
            <person name="Garner P."/>
            <person name="Garnett J."/>
            <person name="Gilbert J.G.R."/>
            <person name="Gilson C.J."/>
            <person name="Ghori J."/>
            <person name="Grafham D.V."/>
            <person name="Gribble S.M."/>
            <person name="Griffiths C."/>
            <person name="Hall R.E."/>
            <person name="Hammond S."/>
            <person name="Harley J.L."/>
            <person name="Hart E.A."/>
            <person name="Heath P.D."/>
            <person name="Howden P.J."/>
            <person name="Huckle E.J."/>
            <person name="Hunt P.J."/>
            <person name="Hunt A.R."/>
            <person name="Johnson C."/>
            <person name="Johnson D."/>
            <person name="Kay M."/>
            <person name="Kimberley A.M."/>
            <person name="King A."/>
            <person name="Laird G.K."/>
            <person name="Langford C.J."/>
            <person name="Lawlor S."/>
            <person name="Leongamornlert D.A."/>
            <person name="Lloyd D.M."/>
            <person name="Lloyd C."/>
            <person name="Loveland J.E."/>
            <person name="Lovell J."/>
            <person name="Martin S."/>
            <person name="Mashreghi-Mohammadi M."/>
            <person name="McLaren S.J."/>
            <person name="McMurray A."/>
            <person name="Milne S."/>
            <person name="Moore M.J.F."/>
            <person name="Nickerson T."/>
            <person name="Palmer S.A."/>
            <person name="Pearce A.V."/>
            <person name="Peck A.I."/>
            <person name="Pelan S."/>
            <person name="Phillimore B."/>
            <person name="Porter K.M."/>
            <person name="Rice C.M."/>
            <person name="Searle S."/>
            <person name="Sehra H.K."/>
            <person name="Shownkeen R."/>
            <person name="Skuce C.D."/>
            <person name="Smith M."/>
            <person name="Steward C.A."/>
            <person name="Sycamore N."/>
            <person name="Tester J."/>
            <person name="Thomas D.W."/>
            <person name="Tracey A."/>
            <person name="Tromans A."/>
            <person name="Tubby B."/>
            <person name="Wall M."/>
            <person name="Wallis J.M."/>
            <person name="West A.P."/>
            <person name="Whitehead S.L."/>
            <person name="Willey D.L."/>
            <person name="Wilming L."/>
            <person name="Wray P.W."/>
            <person name="Wright M.W."/>
            <person name="Young L."/>
            <person name="Coulson A."/>
            <person name="Durbin R.M."/>
            <person name="Hubbard T."/>
            <person name="Sulston J.E."/>
            <person name="Beck S."/>
            <person name="Bentley D.R."/>
            <person name="Rogers J."/>
            <person name="Ross M.T."/>
        </authorList>
    </citation>
    <scope>NUCLEOTIDE SEQUENCE [LARGE SCALE GENOMIC DNA]</scope>
</reference>
<reference key="5">
    <citation type="submission" date="2005-07" db="EMBL/GenBank/DDBJ databases">
        <authorList>
            <person name="Mural R.J."/>
            <person name="Istrail S."/>
            <person name="Sutton G.G."/>
            <person name="Florea L."/>
            <person name="Halpern A.L."/>
            <person name="Mobarry C.M."/>
            <person name="Lippert R."/>
            <person name="Walenz B."/>
            <person name="Shatkay H."/>
            <person name="Dew I."/>
            <person name="Miller J.R."/>
            <person name="Flanigan M.J."/>
            <person name="Edwards N.J."/>
            <person name="Bolanos R."/>
            <person name="Fasulo D."/>
            <person name="Halldorsson B.V."/>
            <person name="Hannenhalli S."/>
            <person name="Turner R."/>
            <person name="Yooseph S."/>
            <person name="Lu F."/>
            <person name="Nusskern D.R."/>
            <person name="Shue B.C."/>
            <person name="Zheng X.H."/>
            <person name="Zhong F."/>
            <person name="Delcher A.L."/>
            <person name="Huson D.H."/>
            <person name="Kravitz S.A."/>
            <person name="Mouchard L."/>
            <person name="Reinert K."/>
            <person name="Remington K.A."/>
            <person name="Clark A.G."/>
            <person name="Waterman M.S."/>
            <person name="Eichler E.E."/>
            <person name="Adams M.D."/>
            <person name="Hunkapiller M.W."/>
            <person name="Myers E.W."/>
            <person name="Venter J.C."/>
        </authorList>
    </citation>
    <scope>NUCLEOTIDE SEQUENCE [LARGE SCALE GENOMIC DNA]</scope>
</reference>
<reference key="6">
    <citation type="journal article" date="2004" name="Genome Res.">
        <title>The status, quality, and expansion of the NIH full-length cDNA project: the Mammalian Gene Collection (MGC).</title>
        <authorList>
            <consortium name="The MGC Project Team"/>
        </authorList>
    </citation>
    <scope>NUCLEOTIDE SEQUENCE [LARGE SCALE MRNA]</scope>
    <source>
        <tissue>Testis</tissue>
    </source>
</reference>
<reference key="7">
    <citation type="journal article" date="2013" name="J. Proteome Res.">
        <title>Toward a comprehensive characterization of a human cancer cell phosphoproteome.</title>
        <authorList>
            <person name="Zhou H."/>
            <person name="Di Palma S."/>
            <person name="Preisinger C."/>
            <person name="Peng M."/>
            <person name="Polat A.N."/>
            <person name="Heck A.J."/>
            <person name="Mohammed S."/>
        </authorList>
    </citation>
    <scope>PHOSPHORYLATION [LARGE SCALE ANALYSIS] AT SER-29</scope>
    <scope>IDENTIFICATION BY MASS SPECTROMETRY [LARGE SCALE ANALYSIS]</scope>
    <source>
        <tissue>Erythroleukemia</tissue>
    </source>
</reference>
<reference key="8">
    <citation type="journal article" date="2015" name="Mol. Cell">
        <title>CUL3-KBTBD6/KBTBD7 ubiquitin ligase cooperates with GABARAP proteins to spatially restrict TIAM1-RAC1 signaling.</title>
        <authorList>
            <person name="Genau H.M."/>
            <person name="Huber J."/>
            <person name="Baschieri F."/>
            <person name="Akutsu M."/>
            <person name="Doetsch V."/>
            <person name="Farhan H."/>
            <person name="Rogov V."/>
            <person name="Behrends C."/>
        </authorList>
    </citation>
    <scope>FUNCTION</scope>
    <scope>PATHWAY</scope>
    <scope>SUBUNIT</scope>
    <scope>INTERACTION WITH GABARAP; GABARAPL1; GABARAPL2 AND MAP1LC3B</scope>
    <scope>SUBCELLULAR LOCATION</scope>
    <scope>DOMAIN</scope>
    <scope>MOTIF</scope>
    <scope>MUTAGENESIS OF MET-99; 668-TRP--VAL-671 AND TRP-668</scope>
</reference>
<protein>
    <recommendedName>
        <fullName evidence="4">Kelch repeat and BTB domain-containing protein 7</fullName>
    </recommendedName>
</protein>
<feature type="chain" id="PRO_0000119085" description="Kelch repeat and BTB domain-containing protein 7">
    <location>
        <begin position="1"/>
        <end position="684"/>
    </location>
</feature>
<feature type="domain" description="BTB" evidence="1">
    <location>
        <begin position="63"/>
        <end position="138"/>
    </location>
</feature>
<feature type="repeat" description="Kelch 1">
    <location>
        <begin position="386"/>
        <end position="435"/>
    </location>
</feature>
<feature type="repeat" description="Kelch 2">
    <location>
        <begin position="436"/>
        <end position="484"/>
    </location>
</feature>
<feature type="repeat" description="Kelch 3">
    <location>
        <begin position="486"/>
        <end position="523"/>
    </location>
</feature>
<feature type="repeat" description="Kelch 4">
    <location>
        <begin position="524"/>
        <end position="564"/>
    </location>
</feature>
<feature type="repeat" description="Kelch 5">
    <location>
        <begin position="567"/>
        <end position="616"/>
    </location>
</feature>
<feature type="region of interest" description="Disordered" evidence="2">
    <location>
        <begin position="1"/>
        <end position="27"/>
    </location>
</feature>
<feature type="region of interest" description="Disordered" evidence="2">
    <location>
        <begin position="630"/>
        <end position="666"/>
    </location>
</feature>
<feature type="short sequence motif" description="ATG8 interaction motif (AIM)" evidence="3">
    <location>
        <begin position="668"/>
        <end position="671"/>
    </location>
</feature>
<feature type="compositionally biased region" description="Basic residues" evidence="2">
    <location>
        <begin position="10"/>
        <end position="26"/>
    </location>
</feature>
<feature type="compositionally biased region" description="Acidic residues" evidence="2">
    <location>
        <begin position="631"/>
        <end position="654"/>
    </location>
</feature>
<feature type="modified residue" description="Phosphoserine" evidence="7">
    <location>
        <position position="29"/>
    </location>
</feature>
<feature type="mutagenesis site" description="Loss of interaction with CUL3. Loss of function in TIAM1 degradation." evidence="3">
    <original>M</original>
    <variation>A</variation>
    <location>
        <position position="99"/>
    </location>
</feature>
<feature type="mutagenesis site" description="Decreased interaction with GABARAP and GABARAPL2. Loss of function in TIAM1 ubiquitination and degradation. No effect on assembly of the CUL3(KBTBD6/7) E3 ubiquitin ligase complex." evidence="3">
    <original>WVQV</original>
    <variation>AVQA</variation>
    <location>
        <begin position="668"/>
        <end position="671"/>
    </location>
</feature>
<feature type="mutagenesis site" description="Decreased interaction with GABARAP and GABARAPL2." evidence="3">
    <original>W</original>
    <variation>A</variation>
    <location>
        <position position="668"/>
    </location>
</feature>
<feature type="sequence conflict" description="In Ref. 2; CAB66716." evidence="4" ref="2">
    <original>P</original>
    <variation>S</variation>
    <location>
        <position position="361"/>
    </location>
</feature>
<feature type="sequence conflict" description="In Ref. 3; BAC03641." evidence="4" ref="3">
    <original>L</original>
    <variation>S</variation>
    <location>
        <position position="602"/>
    </location>
</feature>
<feature type="sequence conflict" description="In Ref. 3; BAC03641." evidence="4" ref="3">
    <original>C</original>
    <variation>Y</variation>
    <location>
        <position position="622"/>
    </location>
</feature>
<accession>Q8WVZ9</accession>
<accession>B5TZ86</accession>
<accession>Q5T6Y7</accession>
<accession>Q8NB99</accession>
<accession>Q9H0I6</accession>
<proteinExistence type="evidence at protein level"/>
<gene>
    <name evidence="6" type="primary">KBTBD7</name>
</gene>
<comment type="function">
    <text evidence="3">As part of the CUL3(KBTBD6/7) E3 ubiquitin ligase complex functions as a substrate adapter for the RAC1 guanine exchange factor (GEF) TIAM1, mediating its 'Lys-48' ubiquitination and proteasomal degradation (PubMed:25684205). By controlling this ubiquitination, regulates RAC1 signal transduction and downstream biological processes including the organization of the cytoskeleton, cell migration and cell proliferation (PubMed:25684205). Ubiquitination of TIAM1 requires the membrane-associated protein GABARAP which may restrict locally the activity of the complex (PubMed:25684205).</text>
</comment>
<comment type="pathway">
    <text evidence="3">Protein modification; protein ubiquitination.</text>
</comment>
<comment type="subunit">
    <text evidence="3">Core component of a BCR3 (BTB-CUL3-RBX1) E3 ubiquitin ligase complex, also named Cul3-RING ubiquitin ligase complex CUL3(KBTBD6/7), composed of CUL3, RBX1, KBTBD6 and KBTBD7 (PubMed:25684205). Interacts with GABARAP; the interaction is direct and is required for the ubiquitination of TIAM1 (PubMed:25684205). Interacts with GABARAPL1, GABARAPL2 and MAP1LC3B; the interaction is direct (PubMed:25684205).</text>
</comment>
<comment type="interaction">
    <interactant intactId="EBI-473695">
        <id>Q8WVZ9</id>
    </interactant>
    <interactant intactId="EBI-711501">
        <id>Q9BWC9</id>
        <label>CCDC106</label>
    </interactant>
    <organismsDiffer>false</organismsDiffer>
    <experiments>3</experiments>
</comment>
<comment type="interaction">
    <interactant intactId="EBI-473695">
        <id>Q8WVZ9</id>
    </interactant>
    <interactant intactId="EBI-456129">
        <id>Q13618</id>
        <label>CUL3</label>
    </interactant>
    <organismsDiffer>false</organismsDiffer>
    <experiments>13</experiments>
</comment>
<comment type="interaction">
    <interactant intactId="EBI-473695">
        <id>Q8WVZ9</id>
    </interactant>
    <interactant intactId="EBI-712001">
        <id>O95166</id>
        <label>GABARAP</label>
    </interactant>
    <organismsDiffer>false</organismsDiffer>
    <experiments>7</experiments>
</comment>
<comment type="interaction">
    <interactant intactId="EBI-473695">
        <id>Q8WVZ9</id>
    </interactant>
    <interactant intactId="EBI-746969">
        <id>Q9H0R8</id>
        <label>GABARAPL1</label>
    </interactant>
    <organismsDiffer>false</organismsDiffer>
    <experiments>9</experiments>
</comment>
<comment type="interaction">
    <interactant intactId="EBI-473695">
        <id>Q8WVZ9</id>
    </interactant>
    <interactant intactId="EBI-720116">
        <id>P60520</id>
        <label>GABARAPL2</label>
    </interactant>
    <organismsDiffer>false</organismsDiffer>
    <experiments>7</experiments>
</comment>
<comment type="interaction">
    <interactant intactId="EBI-473695">
        <id>Q8WVZ9</id>
    </interactant>
    <interactant intactId="EBI-2514778">
        <id>Q86V97</id>
        <label>KBTBD6</label>
    </interactant>
    <organismsDiffer>false</organismsDiffer>
    <experiments>17</experiments>
</comment>
<comment type="interaction">
    <interactant intactId="EBI-473695">
        <id>Q8WVZ9</id>
    </interactant>
    <interactant intactId="EBI-21328977">
        <id>Q8NFY9</id>
        <label>KBTBD8</label>
    </interactant>
    <organismsDiffer>false</organismsDiffer>
    <experiments>6</experiments>
</comment>
<comment type="interaction">
    <interactant intactId="EBI-473695">
        <id>Q8WVZ9</id>
    </interactant>
    <interactant intactId="EBI-2796400">
        <id>Q9UIH9</id>
        <label>KLF15</label>
    </interactant>
    <organismsDiffer>false</organismsDiffer>
    <experiments>3</experiments>
</comment>
<comment type="interaction">
    <interactant intactId="EBI-473695">
        <id>Q8WVZ9</id>
    </interactant>
    <interactant intactId="EBI-720768">
        <id>Q9H492</id>
        <label>MAP1LC3A</label>
    </interactant>
    <organismsDiffer>false</organismsDiffer>
    <experiments>2</experiments>
</comment>
<comment type="interaction">
    <interactant intactId="EBI-473695">
        <id>Q8WVZ9</id>
    </interactant>
    <interactant intactId="EBI-373144">
        <id>Q9GZQ8</id>
        <label>MAP1LC3B</label>
    </interactant>
    <organismsDiffer>false</organismsDiffer>
    <experiments>7</experiments>
</comment>
<comment type="interaction">
    <interactant intactId="EBI-473695">
        <id>Q8WVZ9</id>
    </interactant>
    <interactant intactId="EBI-2603996">
        <id>Q9BXW4</id>
        <label>MAP1LC3C</label>
    </interactant>
    <organismsDiffer>false</organismsDiffer>
    <experiments>4</experiments>
</comment>
<comment type="interaction">
    <interactant intactId="EBI-473695">
        <id>Q8WVZ9</id>
    </interactant>
    <interactant intactId="EBI-16439278">
        <id>Q6FHY5</id>
        <label>MEOX2</label>
    </interactant>
    <organismsDiffer>false</organismsDiffer>
    <experiments>3</experiments>
</comment>
<comment type="interaction">
    <interactant intactId="EBI-473695">
        <id>Q8WVZ9</id>
    </interactant>
    <interactant intactId="EBI-713786">
        <id>Q8IXK0</id>
        <label>PHC2</label>
    </interactant>
    <organismsDiffer>false</organismsDiffer>
    <experiments>3</experiments>
</comment>
<comment type="interaction">
    <interactant intactId="EBI-473695">
        <id>Q8WVZ9</id>
    </interactant>
    <interactant intactId="EBI-355546">
        <id>P61289</id>
        <label>PSME3</label>
    </interactant>
    <organismsDiffer>false</organismsDiffer>
    <experiments>3</experiments>
</comment>
<comment type="interaction">
    <interactant intactId="EBI-473695">
        <id>Q8WVZ9</id>
    </interactant>
    <interactant intactId="EBI-1050007">
        <id>Q13009</id>
        <label>TIAM1</label>
    </interactant>
    <organismsDiffer>false</organismsDiffer>
    <experiments>2</experiments>
</comment>
<comment type="subcellular location">
    <subcellularLocation>
        <location evidence="5">Cytoplasm</location>
    </subcellularLocation>
    <subcellularLocation>
        <location evidence="5">Nucleus</location>
    </subcellularLocation>
</comment>
<comment type="domain">
    <text evidence="3">The ATG8 interaction motif (AIM) mediates interaction with proteins of the ATG8 family including GABARAP.</text>
</comment>
<comment type="domain">
    <text evidence="3">The BTB domain is required for interaction with CUL3.</text>
</comment>
<comment type="domain">
    <text evidence="3">The Kelch repeats mediate interaction with TIAM1, a CUL3(KBTBD6/7) E3 ubiquitin ligase substrate.</text>
</comment>
<dbReference type="EMBL" id="AL136782">
    <property type="protein sequence ID" value="CAB66716.1"/>
    <property type="molecule type" value="mRNA"/>
</dbReference>
<dbReference type="EMBL" id="FJ150424">
    <property type="protein sequence ID" value="ACH92650.1"/>
    <property type="molecule type" value="mRNA"/>
</dbReference>
<dbReference type="EMBL" id="AK091344">
    <property type="protein sequence ID" value="BAC03641.1"/>
    <property type="molecule type" value="mRNA"/>
</dbReference>
<dbReference type="EMBL" id="AL354696">
    <property type="status" value="NOT_ANNOTATED_CDS"/>
    <property type="molecule type" value="Genomic_DNA"/>
</dbReference>
<dbReference type="EMBL" id="CH471075">
    <property type="protein sequence ID" value="EAX08647.1"/>
    <property type="molecule type" value="Genomic_DNA"/>
</dbReference>
<dbReference type="EMBL" id="BC022033">
    <property type="protein sequence ID" value="AAH22033.1"/>
    <property type="molecule type" value="mRNA"/>
</dbReference>
<dbReference type="CCDS" id="CCDS9377.1"/>
<dbReference type="RefSeq" id="NP_115514.2">
    <property type="nucleotide sequence ID" value="NM_032138.5"/>
</dbReference>
<dbReference type="SMR" id="Q8WVZ9"/>
<dbReference type="BioGRID" id="123873">
    <property type="interactions" value="243"/>
</dbReference>
<dbReference type="ComplexPortal" id="CPX-8935">
    <property type="entry name" value="CRL3 E3 ubiquitin ligase complex, KBTBD6-KBTBD7 variant"/>
</dbReference>
<dbReference type="CORUM" id="Q8WVZ9"/>
<dbReference type="FunCoup" id="Q8WVZ9">
    <property type="interactions" value="1070"/>
</dbReference>
<dbReference type="IntAct" id="Q8WVZ9">
    <property type="interactions" value="208"/>
</dbReference>
<dbReference type="MINT" id="Q8WVZ9"/>
<dbReference type="STRING" id="9606.ENSP00000368797"/>
<dbReference type="iPTMnet" id="Q8WVZ9"/>
<dbReference type="PhosphoSitePlus" id="Q8WVZ9"/>
<dbReference type="BioMuta" id="KBTBD7"/>
<dbReference type="DMDM" id="45477155"/>
<dbReference type="jPOST" id="Q8WVZ9"/>
<dbReference type="MassIVE" id="Q8WVZ9"/>
<dbReference type="PaxDb" id="9606-ENSP00000368797"/>
<dbReference type="PeptideAtlas" id="Q8WVZ9"/>
<dbReference type="ProteomicsDB" id="74839"/>
<dbReference type="Pumba" id="Q8WVZ9"/>
<dbReference type="Antibodypedia" id="23391">
    <property type="antibodies" value="153 antibodies from 22 providers"/>
</dbReference>
<dbReference type="DNASU" id="84078"/>
<dbReference type="Ensembl" id="ENST00000379483.4">
    <property type="protein sequence ID" value="ENSP00000368797.3"/>
    <property type="gene ID" value="ENSG00000120696.9"/>
</dbReference>
<dbReference type="GeneID" id="84078"/>
<dbReference type="KEGG" id="hsa:84078"/>
<dbReference type="MANE-Select" id="ENST00000379483.4">
    <property type="protein sequence ID" value="ENSP00000368797.3"/>
    <property type="RefSeq nucleotide sequence ID" value="NM_032138.7"/>
    <property type="RefSeq protein sequence ID" value="NP_115514.2"/>
</dbReference>
<dbReference type="UCSC" id="uc001uxw.2">
    <property type="organism name" value="human"/>
</dbReference>
<dbReference type="AGR" id="HGNC:25266"/>
<dbReference type="CTD" id="84078"/>
<dbReference type="DisGeNET" id="84078"/>
<dbReference type="GeneCards" id="KBTBD7"/>
<dbReference type="HGNC" id="HGNC:25266">
    <property type="gene designation" value="KBTBD7"/>
</dbReference>
<dbReference type="HPA" id="ENSG00000120696">
    <property type="expression patterns" value="Low tissue specificity"/>
</dbReference>
<dbReference type="MIM" id="617739">
    <property type="type" value="gene"/>
</dbReference>
<dbReference type="neXtProt" id="NX_Q8WVZ9"/>
<dbReference type="OpenTargets" id="ENSG00000120696"/>
<dbReference type="PharmGKB" id="PA134934036"/>
<dbReference type="VEuPathDB" id="HostDB:ENSG00000120696"/>
<dbReference type="eggNOG" id="ENOG502QWK2">
    <property type="taxonomic scope" value="Eukaryota"/>
</dbReference>
<dbReference type="GeneTree" id="ENSGT00940000155175"/>
<dbReference type="HOGENOM" id="CLU_004253_15_1_1"/>
<dbReference type="InParanoid" id="Q8WVZ9"/>
<dbReference type="OMA" id="ACVFQDQ"/>
<dbReference type="OrthoDB" id="6359816at2759"/>
<dbReference type="PAN-GO" id="Q8WVZ9">
    <property type="GO annotations" value="0 GO annotations based on evolutionary models"/>
</dbReference>
<dbReference type="PhylomeDB" id="Q8WVZ9"/>
<dbReference type="TreeFam" id="TF332672"/>
<dbReference type="PathwayCommons" id="Q8WVZ9"/>
<dbReference type="Reactome" id="R-HSA-5658442">
    <property type="pathway name" value="Regulation of RAS by GAPs"/>
</dbReference>
<dbReference type="Reactome" id="R-HSA-8951664">
    <property type="pathway name" value="Neddylation"/>
</dbReference>
<dbReference type="Reactome" id="R-HSA-983168">
    <property type="pathway name" value="Antigen processing: Ubiquitination &amp; Proteasome degradation"/>
</dbReference>
<dbReference type="SignaLink" id="Q8WVZ9"/>
<dbReference type="UniPathway" id="UPA00143"/>
<dbReference type="BioGRID-ORCS" id="84078">
    <property type="hits" value="9 hits in 1199 CRISPR screens"/>
</dbReference>
<dbReference type="ChiTaRS" id="KBTBD7">
    <property type="organism name" value="human"/>
</dbReference>
<dbReference type="GeneWiki" id="KBTBD7"/>
<dbReference type="GenomeRNAi" id="84078"/>
<dbReference type="Pharos" id="Q8WVZ9">
    <property type="development level" value="Tbio"/>
</dbReference>
<dbReference type="PRO" id="PR:Q8WVZ9"/>
<dbReference type="Proteomes" id="UP000005640">
    <property type="component" value="Chromosome 13"/>
</dbReference>
<dbReference type="RNAct" id="Q8WVZ9">
    <property type="molecule type" value="protein"/>
</dbReference>
<dbReference type="Bgee" id="ENSG00000120696">
    <property type="expression patterns" value="Expressed in secondary oocyte and 188 other cell types or tissues"/>
</dbReference>
<dbReference type="GO" id="GO:0031463">
    <property type="term" value="C:Cul3-RING ubiquitin ligase complex"/>
    <property type="evidence" value="ECO:0000314"/>
    <property type="project" value="UniProtKB"/>
</dbReference>
<dbReference type="GO" id="GO:0005737">
    <property type="term" value="C:cytoplasm"/>
    <property type="evidence" value="ECO:0000318"/>
    <property type="project" value="GO_Central"/>
</dbReference>
<dbReference type="GO" id="GO:0005829">
    <property type="term" value="C:cytosol"/>
    <property type="evidence" value="ECO:0000304"/>
    <property type="project" value="Reactome"/>
</dbReference>
<dbReference type="GO" id="GO:0005634">
    <property type="term" value="C:nucleus"/>
    <property type="evidence" value="ECO:0007669"/>
    <property type="project" value="UniProtKB-SubCell"/>
</dbReference>
<dbReference type="GO" id="GO:1990756">
    <property type="term" value="F:ubiquitin-like ligase-substrate adaptor activity"/>
    <property type="evidence" value="ECO:0000318"/>
    <property type="project" value="GO_Central"/>
</dbReference>
<dbReference type="GO" id="GO:0009968">
    <property type="term" value="P:negative regulation of signal transduction"/>
    <property type="evidence" value="ECO:0007669"/>
    <property type="project" value="UniProtKB-KW"/>
</dbReference>
<dbReference type="GO" id="GO:0043161">
    <property type="term" value="P:proteasome-mediated ubiquitin-dependent protein catabolic process"/>
    <property type="evidence" value="ECO:0000315"/>
    <property type="project" value="UniProtKB"/>
</dbReference>
<dbReference type="GO" id="GO:0070936">
    <property type="term" value="P:protein K48-linked ubiquitination"/>
    <property type="evidence" value="ECO:0000314"/>
    <property type="project" value="UniProtKB"/>
</dbReference>
<dbReference type="GO" id="GO:0035020">
    <property type="term" value="P:regulation of Rac protein signal transduction"/>
    <property type="evidence" value="ECO:0000315"/>
    <property type="project" value="UniProtKB"/>
</dbReference>
<dbReference type="CDD" id="cd18482">
    <property type="entry name" value="BACK_KBTBD6_7"/>
    <property type="match status" value="1"/>
</dbReference>
<dbReference type="CDD" id="cd18273">
    <property type="entry name" value="BTB_POZ_KBTBD6_7"/>
    <property type="match status" value="1"/>
</dbReference>
<dbReference type="FunFam" id="2.120.10.80:FF:000028">
    <property type="entry name" value="Kelch repeat and BTB (POZ) domain-containing 7"/>
    <property type="match status" value="1"/>
</dbReference>
<dbReference type="FunFam" id="1.25.40.420:FF:000024">
    <property type="entry name" value="Kelch repeat and BTB domain containing 7"/>
    <property type="match status" value="1"/>
</dbReference>
<dbReference type="Gene3D" id="1.25.40.420">
    <property type="match status" value="1"/>
</dbReference>
<dbReference type="Gene3D" id="2.120.10.80">
    <property type="entry name" value="Kelch-type beta propeller"/>
    <property type="match status" value="1"/>
</dbReference>
<dbReference type="Gene3D" id="3.30.710.10">
    <property type="entry name" value="Potassium Channel Kv1.1, Chain A"/>
    <property type="match status" value="1"/>
</dbReference>
<dbReference type="InterPro" id="IPR011705">
    <property type="entry name" value="BACK"/>
</dbReference>
<dbReference type="InterPro" id="IPR017096">
    <property type="entry name" value="BTB-kelch_protein"/>
</dbReference>
<dbReference type="InterPro" id="IPR000210">
    <property type="entry name" value="BTB/POZ_dom"/>
</dbReference>
<dbReference type="InterPro" id="IPR046790">
    <property type="entry name" value="KBTB_W-LIR"/>
</dbReference>
<dbReference type="InterPro" id="IPR047931">
    <property type="entry name" value="KBTBD6_7_BACK"/>
</dbReference>
<dbReference type="InterPro" id="IPR047933">
    <property type="entry name" value="KBTBD6_7_BTB_POZ"/>
</dbReference>
<dbReference type="InterPro" id="IPR015915">
    <property type="entry name" value="Kelch-typ_b-propeller"/>
</dbReference>
<dbReference type="InterPro" id="IPR006652">
    <property type="entry name" value="Kelch_1"/>
</dbReference>
<dbReference type="InterPro" id="IPR011333">
    <property type="entry name" value="SKP1/BTB/POZ_sf"/>
</dbReference>
<dbReference type="PANTHER" id="PTHR24412">
    <property type="entry name" value="KELCH PROTEIN"/>
    <property type="match status" value="1"/>
</dbReference>
<dbReference type="PANTHER" id="PTHR24412:SF23">
    <property type="entry name" value="KELCH REPEAT AND BTB DOMAIN-CONTAINING PROTEIN 7"/>
    <property type="match status" value="1"/>
</dbReference>
<dbReference type="Pfam" id="PF07707">
    <property type="entry name" value="BACK"/>
    <property type="match status" value="1"/>
</dbReference>
<dbReference type="Pfam" id="PF00651">
    <property type="entry name" value="BTB"/>
    <property type="match status" value="1"/>
</dbReference>
<dbReference type="Pfam" id="PF20165">
    <property type="entry name" value="KBTB_W-LIR"/>
    <property type="match status" value="1"/>
</dbReference>
<dbReference type="Pfam" id="PF01344">
    <property type="entry name" value="Kelch_1"/>
    <property type="match status" value="1"/>
</dbReference>
<dbReference type="PIRSF" id="PIRSF037037">
    <property type="entry name" value="Kelch-like_protein_gigaxonin"/>
    <property type="match status" value="1"/>
</dbReference>
<dbReference type="SMART" id="SM00875">
    <property type="entry name" value="BACK"/>
    <property type="match status" value="1"/>
</dbReference>
<dbReference type="SMART" id="SM00225">
    <property type="entry name" value="BTB"/>
    <property type="match status" value="1"/>
</dbReference>
<dbReference type="SMART" id="SM00612">
    <property type="entry name" value="Kelch"/>
    <property type="match status" value="2"/>
</dbReference>
<dbReference type="SUPFAM" id="SSF117281">
    <property type="entry name" value="Kelch motif"/>
    <property type="match status" value="1"/>
</dbReference>
<dbReference type="SUPFAM" id="SSF54695">
    <property type="entry name" value="POZ domain"/>
    <property type="match status" value="1"/>
</dbReference>
<dbReference type="PROSITE" id="PS50097">
    <property type="entry name" value="BTB"/>
    <property type="match status" value="1"/>
</dbReference>
<sequence>MQSREDVPRSRRLASPRGGRRPKRISKPSVSAFFTGPEELKDTAHSAALLAQLKSFYDARLLCDVTIEVVTPGSGPGTGRLFSCNRNVLAAACPYFKSMFTGGMYESQQASVTMHDVDAESFEVLVDYCYTGRVSLSEANVQRLYAASDMLQLEYVREACASFLARRLDLTNCTAILKFADAFDHHKLRSQAQSYIAHNFKQLSRMGSIREETLADLTLAQLLAVLRLDSLDIESERTVCHVAVQWLEAAAKERGPSAAEVFKCVRWMHFTEEDQDYLEGLLTKPIVKKYCLDVIEGALQMRYGDLLYKSLVPVPNSSSSSSSSNSLVSAAENPPQRLGMCAKEMVIFFGHPRDPFLCYDPYSGDIYTMPSPLTSFAHTKTVTSSAVCVSPDHDIYLAAQPRKDLWVYKPAQNSWQQLADRLLCREGMDVAYLNGYIYILGGRDPITGVKLKEVECYSVQRNQWALVAPVPHSFYSFELIVVQNYLYAVNSKRMLCYDPSHNMWLNCASLKRSDFQEACVFNDEIYCICDIPVMKVYNPARGEWRRISNIPLDSETHNYQIVNHDQKLLLITSTTPQWKKNRVTVYEYDTREDQWINIGTMLGLLQFDSGFICLCARVYPSCLEPGQSFITEEDDARSESSTEWDLDGFSELDSESGSSSSFSDDEVWVQVAPQRNAQDQQGSL</sequence>